<dbReference type="EMBL" id="AK081019">
    <property type="protein sequence ID" value="BAC38117.1"/>
    <property type="molecule type" value="mRNA"/>
</dbReference>
<dbReference type="EMBL" id="BC012409">
    <property type="protein sequence ID" value="AAH12409.1"/>
    <property type="status" value="ALT_INIT"/>
    <property type="molecule type" value="mRNA"/>
</dbReference>
<dbReference type="EMBL" id="X04480">
    <property type="protein sequence ID" value="CAA28168.1"/>
    <property type="molecule type" value="mRNA"/>
</dbReference>
<dbReference type="EMBL" id="X04482">
    <property type="protein sequence ID" value="CAA28170.1"/>
    <property type="molecule type" value="mRNA"/>
</dbReference>
<dbReference type="EMBL" id="M28139">
    <property type="protein sequence ID" value="AAA74553.1"/>
    <property type="molecule type" value="Genomic_DNA"/>
</dbReference>
<dbReference type="EMBL" id="M14983">
    <property type="protein sequence ID" value="AAA37925.1"/>
    <property type="molecule type" value="Genomic_DNA"/>
</dbReference>
<dbReference type="CCDS" id="CCDS48661.1">
    <molecule id="P05017-1"/>
</dbReference>
<dbReference type="PIR" id="A25540">
    <property type="entry name" value="A25540"/>
</dbReference>
<dbReference type="RefSeq" id="NP_001104745.1">
    <molecule id="P05017-1"/>
    <property type="nucleotide sequence ID" value="NM_001111275.2"/>
</dbReference>
<dbReference type="RefSeq" id="NP_001300939.1">
    <molecule id="P05017-1"/>
    <property type="nucleotide sequence ID" value="NM_001314010.1"/>
</dbReference>
<dbReference type="RefSeq" id="NP_034642.2">
    <property type="nucleotide sequence ID" value="NM_010512.5"/>
</dbReference>
<dbReference type="SMR" id="P05017"/>
<dbReference type="FunCoup" id="P05017">
    <property type="interactions" value="1113"/>
</dbReference>
<dbReference type="MINT" id="P05017"/>
<dbReference type="STRING" id="10090.ENSMUSP00000100937"/>
<dbReference type="iPTMnet" id="P05017"/>
<dbReference type="PhosphoSitePlus" id="P05017"/>
<dbReference type="CPTAC" id="non-CPTAC-3716"/>
<dbReference type="jPOST" id="P05017"/>
<dbReference type="PaxDb" id="10090-ENSMUSP00000056668"/>
<dbReference type="PeptideAtlas" id="P05017"/>
<dbReference type="ProteomicsDB" id="267220">
    <molecule id="P05017-1"/>
</dbReference>
<dbReference type="ProteomicsDB" id="267221">
    <molecule id="P05017-2"/>
</dbReference>
<dbReference type="ABCD" id="P05017">
    <property type="antibodies" value="1 sequenced antibody"/>
</dbReference>
<dbReference type="Antibodypedia" id="18040">
    <property type="antibodies" value="1503 antibodies from 41 providers"/>
</dbReference>
<dbReference type="DNASU" id="16000"/>
<dbReference type="Ensembl" id="ENSMUST00000095360.11">
    <molecule id="P05017-1"/>
    <property type="protein sequence ID" value="ENSMUSP00000093005.5"/>
    <property type="gene ID" value="ENSMUSG00000020053.19"/>
</dbReference>
<dbReference type="Ensembl" id="ENSMUST00000122386.8">
    <molecule id="P05017-1"/>
    <property type="protein sequence ID" value="ENSMUSP00000113905.2"/>
    <property type="gene ID" value="ENSMUSG00000020053.19"/>
</dbReference>
<dbReference type="GeneID" id="16000"/>
<dbReference type="KEGG" id="mmu:16000"/>
<dbReference type="UCSC" id="uc007gqw.2">
    <molecule id="P05017-1"/>
    <property type="organism name" value="mouse"/>
</dbReference>
<dbReference type="AGR" id="MGI:96432"/>
<dbReference type="CTD" id="3479"/>
<dbReference type="MGI" id="MGI:96432">
    <property type="gene designation" value="Igf1"/>
</dbReference>
<dbReference type="VEuPathDB" id="HostDB:ENSMUSG00000020053"/>
<dbReference type="eggNOG" id="ENOG502RCAB">
    <property type="taxonomic scope" value="Eukaryota"/>
</dbReference>
<dbReference type="GeneTree" id="ENSGT00940000159081"/>
<dbReference type="HOGENOM" id="CLU_123939_0_0_1"/>
<dbReference type="InParanoid" id="P05017"/>
<dbReference type="OMA" id="TLLFKCC"/>
<dbReference type="OrthoDB" id="8936076at2759"/>
<dbReference type="Reactome" id="R-MMU-114608">
    <property type="pathway name" value="Platelet degranulation"/>
</dbReference>
<dbReference type="Reactome" id="R-MMU-2404192">
    <property type="pathway name" value="Signaling by Type 1 Insulin-like Growth Factor 1 Receptor (IGF1R)"/>
</dbReference>
<dbReference type="Reactome" id="R-MMU-2428928">
    <property type="pathway name" value="IRS-related events triggered by IGF1R"/>
</dbReference>
<dbReference type="Reactome" id="R-MMU-2428933">
    <property type="pathway name" value="SHC-related events triggered by IGF1R"/>
</dbReference>
<dbReference type="Reactome" id="R-MMU-381426">
    <property type="pathway name" value="Regulation of Insulin-like Growth Factor (IGF) transport and uptake by Insulin-like Growth Factor Binding Proteins (IGFBPs)"/>
</dbReference>
<dbReference type="Reactome" id="R-MMU-422085">
    <property type="pathway name" value="Synthesis, secretion, and deacylation of Ghrelin"/>
</dbReference>
<dbReference type="BioGRID-ORCS" id="16000">
    <property type="hits" value="2 hits in 77 CRISPR screens"/>
</dbReference>
<dbReference type="ChiTaRS" id="Igf1">
    <property type="organism name" value="mouse"/>
</dbReference>
<dbReference type="PRO" id="PR:P05017"/>
<dbReference type="Proteomes" id="UP000000589">
    <property type="component" value="Chromosome 10"/>
</dbReference>
<dbReference type="RNAct" id="P05017">
    <property type="molecule type" value="protein"/>
</dbReference>
<dbReference type="Bgee" id="ENSMUSG00000020053">
    <property type="expression patterns" value="Expressed in stria vascularis of cochlear duct and 272 other cell types or tissues"/>
</dbReference>
<dbReference type="ExpressionAtlas" id="P05017">
    <property type="expression patterns" value="baseline and differential"/>
</dbReference>
<dbReference type="GO" id="GO:0035867">
    <property type="term" value="C:alphav-beta3 integrin-IGF-1-IGF1R complex"/>
    <property type="evidence" value="ECO:0000250"/>
    <property type="project" value="UniProtKB"/>
</dbReference>
<dbReference type="GO" id="GO:0070382">
    <property type="term" value="C:exocytic vesicle"/>
    <property type="evidence" value="ECO:0000314"/>
    <property type="project" value="UniProtKB"/>
</dbReference>
<dbReference type="GO" id="GO:0005615">
    <property type="term" value="C:extracellular space"/>
    <property type="evidence" value="ECO:0000314"/>
    <property type="project" value="MGI"/>
</dbReference>
<dbReference type="GO" id="GO:0098978">
    <property type="term" value="C:glutamatergic synapse"/>
    <property type="evidence" value="ECO:0000314"/>
    <property type="project" value="SynGO"/>
</dbReference>
<dbReference type="GO" id="GO:0042567">
    <property type="term" value="C:insulin-like growth factor ternary complex"/>
    <property type="evidence" value="ECO:0000250"/>
    <property type="project" value="BHF-UCL"/>
</dbReference>
<dbReference type="GO" id="GO:0099013">
    <property type="term" value="C:neuronal dense core vesicle lumen"/>
    <property type="evidence" value="ECO:0000314"/>
    <property type="project" value="SynGO"/>
</dbReference>
<dbReference type="GO" id="GO:0098794">
    <property type="term" value="C:postsynapse"/>
    <property type="evidence" value="ECO:0007669"/>
    <property type="project" value="GOC"/>
</dbReference>
<dbReference type="GO" id="GO:0008083">
    <property type="term" value="F:growth factor activity"/>
    <property type="evidence" value="ECO:0007669"/>
    <property type="project" value="UniProtKB-KW"/>
</dbReference>
<dbReference type="GO" id="GO:0005179">
    <property type="term" value="F:hormone activity"/>
    <property type="evidence" value="ECO:0007669"/>
    <property type="project" value="Ensembl"/>
</dbReference>
<dbReference type="GO" id="GO:0005158">
    <property type="term" value="F:insulin receptor binding"/>
    <property type="evidence" value="ECO:0000314"/>
    <property type="project" value="MGI"/>
</dbReference>
<dbReference type="GO" id="GO:0005159">
    <property type="term" value="F:insulin-like growth factor receptor binding"/>
    <property type="evidence" value="ECO:0000353"/>
    <property type="project" value="MGI"/>
</dbReference>
<dbReference type="GO" id="GO:0005178">
    <property type="term" value="F:integrin binding"/>
    <property type="evidence" value="ECO:0007669"/>
    <property type="project" value="Ensembl"/>
</dbReference>
<dbReference type="GO" id="GO:0048018">
    <property type="term" value="F:receptor ligand activity"/>
    <property type="evidence" value="ECO:0000314"/>
    <property type="project" value="MGI"/>
</dbReference>
<dbReference type="GO" id="GO:0030297">
    <property type="term" value="F:transmembrane receptor protein tyrosine kinase activator activity"/>
    <property type="evidence" value="ECO:0000314"/>
    <property type="project" value="MGI"/>
</dbReference>
<dbReference type="GO" id="GO:0030521">
    <property type="term" value="P:androgen receptor signaling pathway"/>
    <property type="evidence" value="ECO:0000315"/>
    <property type="project" value="MGI"/>
</dbReference>
<dbReference type="GO" id="GO:0001974">
    <property type="term" value="P:blood vessel remodeling"/>
    <property type="evidence" value="ECO:0000315"/>
    <property type="project" value="MGI"/>
</dbReference>
<dbReference type="GO" id="GO:0035630">
    <property type="term" value="P:bone mineralization involved in bone maturation"/>
    <property type="evidence" value="ECO:0007669"/>
    <property type="project" value="Ensembl"/>
</dbReference>
<dbReference type="GO" id="GO:0048754">
    <property type="term" value="P:branching morphogenesis of an epithelial tube"/>
    <property type="evidence" value="ECO:0000315"/>
    <property type="project" value="MGI"/>
</dbReference>
<dbReference type="GO" id="GO:0001775">
    <property type="term" value="P:cell activation"/>
    <property type="evidence" value="ECO:0000266"/>
    <property type="project" value="MGI"/>
</dbReference>
<dbReference type="GO" id="GO:0048468">
    <property type="term" value="P:cell development"/>
    <property type="evidence" value="ECO:0000315"/>
    <property type="project" value="MGI"/>
</dbReference>
<dbReference type="GO" id="GO:0008283">
    <property type="term" value="P:cell population proliferation"/>
    <property type="evidence" value="ECO:0000315"/>
    <property type="project" value="MGI"/>
</dbReference>
<dbReference type="GO" id="GO:0097696">
    <property type="term" value="P:cell surface receptor signaling pathway via STAT"/>
    <property type="evidence" value="ECO:0007669"/>
    <property type="project" value="Ensembl"/>
</dbReference>
<dbReference type="GO" id="GO:1904646">
    <property type="term" value="P:cellular response to amyloid-beta"/>
    <property type="evidence" value="ECO:0007669"/>
    <property type="project" value="Ensembl"/>
</dbReference>
<dbReference type="GO" id="GO:0071333">
    <property type="term" value="P:cellular response to glucose stimulus"/>
    <property type="evidence" value="ECO:0000314"/>
    <property type="project" value="MGI"/>
</dbReference>
<dbReference type="GO" id="GO:1990314">
    <property type="term" value="P:cellular response to insulin-like growth factor stimulus"/>
    <property type="evidence" value="ECO:0000315"/>
    <property type="project" value="MGI"/>
</dbReference>
<dbReference type="GO" id="GO:0021930">
    <property type="term" value="P:cerebellar granule cell precursor proliferation"/>
    <property type="evidence" value="ECO:0000314"/>
    <property type="project" value="MGI"/>
</dbReference>
<dbReference type="GO" id="GO:0050650">
    <property type="term" value="P:chondroitin sulfate proteoglycan biosynthetic process"/>
    <property type="evidence" value="ECO:0000314"/>
    <property type="project" value="MGI"/>
</dbReference>
<dbReference type="GO" id="GO:0007623">
    <property type="term" value="P:circadian rhythm"/>
    <property type="evidence" value="ECO:0000270"/>
    <property type="project" value="UniProtKB"/>
</dbReference>
<dbReference type="GO" id="GO:0031017">
    <property type="term" value="P:exocrine pancreas development"/>
    <property type="evidence" value="ECO:0000315"/>
    <property type="project" value="MGI"/>
</dbReference>
<dbReference type="GO" id="GO:0097192">
    <property type="term" value="P:extrinsic apoptotic signaling pathway in absence of ligand"/>
    <property type="evidence" value="ECO:0000314"/>
    <property type="project" value="MGI"/>
</dbReference>
<dbReference type="GO" id="GO:0010001">
    <property type="term" value="P:glial cell differentiation"/>
    <property type="evidence" value="ECO:0000315"/>
    <property type="project" value="MGI"/>
</dbReference>
<dbReference type="GO" id="GO:0060396">
    <property type="term" value="P:growth hormone receptor signaling pathway"/>
    <property type="evidence" value="ECO:0007669"/>
    <property type="project" value="Ensembl"/>
</dbReference>
<dbReference type="GO" id="GO:0048839">
    <property type="term" value="P:inner ear development"/>
    <property type="evidence" value="ECO:0000314"/>
    <property type="project" value="MGI"/>
</dbReference>
<dbReference type="GO" id="GO:0008286">
    <property type="term" value="P:insulin receptor signaling pathway"/>
    <property type="evidence" value="ECO:0007669"/>
    <property type="project" value="Ensembl"/>
</dbReference>
<dbReference type="GO" id="GO:0048009">
    <property type="term" value="P:insulin-like growth factor receptor signaling pathway"/>
    <property type="evidence" value="ECO:0000314"/>
    <property type="project" value="MGI"/>
</dbReference>
<dbReference type="GO" id="GO:0048286">
    <property type="term" value="P:lung alveolus development"/>
    <property type="evidence" value="ECO:0000315"/>
    <property type="project" value="MGI"/>
</dbReference>
<dbReference type="GO" id="GO:0030324">
    <property type="term" value="P:lung development"/>
    <property type="evidence" value="ECO:0000316"/>
    <property type="project" value="MGI"/>
</dbReference>
<dbReference type="GO" id="GO:0060463">
    <property type="term" value="P:lung lobe morphogenesis"/>
    <property type="evidence" value="ECO:0000315"/>
    <property type="project" value="MGI"/>
</dbReference>
<dbReference type="GO" id="GO:0060426">
    <property type="term" value="P:lung vasculature development"/>
    <property type="evidence" value="ECO:0000315"/>
    <property type="project" value="MGI"/>
</dbReference>
<dbReference type="GO" id="GO:0030879">
    <property type="term" value="P:mammary gland development"/>
    <property type="evidence" value="ECO:0000315"/>
    <property type="project" value="MGI"/>
</dbReference>
<dbReference type="GO" id="GO:0035264">
    <property type="term" value="P:multicellular organism growth"/>
    <property type="evidence" value="ECO:0000314"/>
    <property type="project" value="MGI"/>
</dbReference>
<dbReference type="GO" id="GO:0014896">
    <property type="term" value="P:muscle hypertrophy"/>
    <property type="evidence" value="ECO:0007669"/>
    <property type="project" value="Ensembl"/>
</dbReference>
<dbReference type="GO" id="GO:0045445">
    <property type="term" value="P:myoblast differentiation"/>
    <property type="evidence" value="ECO:0007669"/>
    <property type="project" value="Ensembl"/>
</dbReference>
<dbReference type="GO" id="GO:0051450">
    <property type="term" value="P:myoblast proliferation"/>
    <property type="evidence" value="ECO:0007669"/>
    <property type="project" value="Ensembl"/>
</dbReference>
<dbReference type="GO" id="GO:0014904">
    <property type="term" value="P:myotube cell development"/>
    <property type="evidence" value="ECO:0007669"/>
    <property type="project" value="Ensembl"/>
</dbReference>
<dbReference type="GO" id="GO:0014902">
    <property type="term" value="P:myotube differentiation"/>
    <property type="evidence" value="ECO:0000314"/>
    <property type="project" value="MGI"/>
</dbReference>
<dbReference type="GO" id="GO:1902430">
    <property type="term" value="P:negative regulation of amyloid-beta formation"/>
    <property type="evidence" value="ECO:0007669"/>
    <property type="project" value="Ensembl"/>
</dbReference>
<dbReference type="GO" id="GO:0060766">
    <property type="term" value="P:negative regulation of androgen receptor signaling pathway"/>
    <property type="evidence" value="ECO:0000315"/>
    <property type="project" value="MGI"/>
</dbReference>
<dbReference type="GO" id="GO:0043066">
    <property type="term" value="P:negative regulation of apoptotic process"/>
    <property type="evidence" value="ECO:0000314"/>
    <property type="project" value="UniProtKB"/>
</dbReference>
<dbReference type="GO" id="GO:0008285">
    <property type="term" value="P:negative regulation of cell population proliferation"/>
    <property type="evidence" value="ECO:0000315"/>
    <property type="project" value="MGI"/>
</dbReference>
<dbReference type="GO" id="GO:0070373">
    <property type="term" value="P:negative regulation of ERK1 and ERK2 cascade"/>
    <property type="evidence" value="ECO:0000316"/>
    <property type="project" value="MGI"/>
</dbReference>
<dbReference type="GO" id="GO:2001237">
    <property type="term" value="P:negative regulation of extrinsic apoptotic signaling pathway"/>
    <property type="evidence" value="ECO:0007669"/>
    <property type="project" value="Ensembl"/>
</dbReference>
<dbReference type="GO" id="GO:0010629">
    <property type="term" value="P:negative regulation of gene expression"/>
    <property type="evidence" value="ECO:0000314"/>
    <property type="project" value="BHF-UCL"/>
</dbReference>
<dbReference type="GO" id="GO:0032691">
    <property type="term" value="P:negative regulation of interleukin-1 beta production"/>
    <property type="evidence" value="ECO:0007669"/>
    <property type="project" value="Ensembl"/>
</dbReference>
<dbReference type="GO" id="GO:0150079">
    <property type="term" value="P:negative regulation of neuroinflammatory response"/>
    <property type="evidence" value="ECO:0007669"/>
    <property type="project" value="Ensembl"/>
</dbReference>
<dbReference type="GO" id="GO:0060283">
    <property type="term" value="P:negative regulation of oocyte development"/>
    <property type="evidence" value="ECO:0007669"/>
    <property type="project" value="Ensembl"/>
</dbReference>
<dbReference type="GO" id="GO:0090201">
    <property type="term" value="P:negative regulation of release of cytochrome c from mitochondria"/>
    <property type="evidence" value="ECO:0000314"/>
    <property type="project" value="UniProtKB"/>
</dbReference>
<dbReference type="GO" id="GO:0034392">
    <property type="term" value="P:negative regulation of smooth muscle cell apoptotic process"/>
    <property type="evidence" value="ECO:0000250"/>
    <property type="project" value="UniProtKB"/>
</dbReference>
<dbReference type="GO" id="GO:0032720">
    <property type="term" value="P:negative regulation of tumor necrosis factor production"/>
    <property type="evidence" value="ECO:0007669"/>
    <property type="project" value="Ensembl"/>
</dbReference>
<dbReference type="GO" id="GO:1905460">
    <property type="term" value="P:negative regulation of vascular associated smooth muscle cell apoptotic process"/>
    <property type="evidence" value="ECO:0007669"/>
    <property type="project" value="Ensembl"/>
</dbReference>
<dbReference type="GO" id="GO:0007399">
    <property type="term" value="P:nervous system development"/>
    <property type="evidence" value="ECO:0000315"/>
    <property type="project" value="MGI"/>
</dbReference>
<dbReference type="GO" id="GO:0001649">
    <property type="term" value="P:osteoblast differentiation"/>
    <property type="evidence" value="ECO:0000270"/>
    <property type="project" value="BHF-UCL"/>
</dbReference>
<dbReference type="GO" id="GO:0043491">
    <property type="term" value="P:phosphatidylinositol 3-kinase/protein kinase B signal transduction"/>
    <property type="evidence" value="ECO:0000314"/>
    <property type="project" value="MGI"/>
</dbReference>
<dbReference type="GO" id="GO:0042104">
    <property type="term" value="P:positive regulation of activated T cell proliferation"/>
    <property type="evidence" value="ECO:0007669"/>
    <property type="project" value="Ensembl"/>
</dbReference>
<dbReference type="GO" id="GO:0070886">
    <property type="term" value="P:positive regulation of calcineurin-NFAT signaling cascade"/>
    <property type="evidence" value="ECO:0007669"/>
    <property type="project" value="Ensembl"/>
</dbReference>
<dbReference type="GO" id="GO:0061051">
    <property type="term" value="P:positive regulation of cell growth involved in cardiac muscle cell development"/>
    <property type="evidence" value="ECO:0007669"/>
    <property type="project" value="Ensembl"/>
</dbReference>
<dbReference type="GO" id="GO:0021940">
    <property type="term" value="P:positive regulation of cerebellar granule cell precursor proliferation"/>
    <property type="evidence" value="ECO:0000314"/>
    <property type="project" value="MGI"/>
</dbReference>
<dbReference type="GO" id="GO:0046326">
    <property type="term" value="P:positive regulation of D-glucose import"/>
    <property type="evidence" value="ECO:0000250"/>
    <property type="project" value="UniProtKB"/>
</dbReference>
<dbReference type="GO" id="GO:0070374">
    <property type="term" value="P:positive regulation of ERK1 and ERK2 cascade"/>
    <property type="evidence" value="ECO:0007669"/>
    <property type="project" value="Ensembl"/>
</dbReference>
<dbReference type="GO" id="GO:0048146">
    <property type="term" value="P:positive regulation of fibroblast proliferation"/>
    <property type="evidence" value="ECO:0007669"/>
    <property type="project" value="Ensembl"/>
</dbReference>
<dbReference type="GO" id="GO:0010628">
    <property type="term" value="P:positive regulation of gene expression"/>
    <property type="evidence" value="ECO:0007669"/>
    <property type="project" value="Ensembl"/>
</dbReference>
<dbReference type="GO" id="GO:0045725">
    <property type="term" value="P:positive regulation of glycogen biosynthetic process"/>
    <property type="evidence" value="ECO:0000250"/>
    <property type="project" value="UniProtKB"/>
</dbReference>
<dbReference type="GO" id="GO:0045821">
    <property type="term" value="P:positive regulation of glycolytic process"/>
    <property type="evidence" value="ECO:0007669"/>
    <property type="project" value="Ensembl"/>
</dbReference>
<dbReference type="GO" id="GO:0010560">
    <property type="term" value="P:positive regulation of glycoprotein biosynthetic process"/>
    <property type="evidence" value="ECO:0007669"/>
    <property type="project" value="Ensembl"/>
</dbReference>
<dbReference type="GO" id="GO:0043568">
    <property type="term" value="P:positive regulation of insulin-like growth factor receptor signaling pathway"/>
    <property type="evidence" value="ECO:0007669"/>
    <property type="project" value="Ensembl"/>
</dbReference>
<dbReference type="GO" id="GO:0043410">
    <property type="term" value="P:positive regulation of MAPK cascade"/>
    <property type="evidence" value="ECO:0000250"/>
    <property type="project" value="UniProtKB"/>
</dbReference>
<dbReference type="GO" id="GO:0045840">
    <property type="term" value="P:positive regulation of mitotic nuclear division"/>
    <property type="evidence" value="ECO:0007669"/>
    <property type="project" value="Ensembl"/>
</dbReference>
<dbReference type="GO" id="GO:0031643">
    <property type="term" value="P:positive regulation of myelination"/>
    <property type="evidence" value="ECO:0000314"/>
    <property type="project" value="ARUK-UCL"/>
</dbReference>
<dbReference type="GO" id="GO:2000288">
    <property type="term" value="P:positive regulation of myoblast proliferation"/>
    <property type="evidence" value="ECO:0000315"/>
    <property type="project" value="MGI"/>
</dbReference>
<dbReference type="GO" id="GO:0045669">
    <property type="term" value="P:positive regulation of osteoblast differentiation"/>
    <property type="evidence" value="ECO:0007669"/>
    <property type="project" value="Ensembl"/>
</dbReference>
<dbReference type="GO" id="GO:0051897">
    <property type="term" value="P:positive regulation of phosphatidylinositol 3-kinase/protein kinase B signal transduction"/>
    <property type="evidence" value="ECO:0000314"/>
    <property type="project" value="MGI"/>
</dbReference>
<dbReference type="GO" id="GO:0050714">
    <property type="term" value="P:positive regulation of protein secretion"/>
    <property type="evidence" value="ECO:0007669"/>
    <property type="project" value="Ensembl"/>
</dbReference>
<dbReference type="GO" id="GO:0046579">
    <property type="term" value="P:positive regulation of Ras protein signal transduction"/>
    <property type="evidence" value="ECO:0007669"/>
    <property type="project" value="Ensembl"/>
</dbReference>
<dbReference type="GO" id="GO:0014911">
    <property type="term" value="P:positive regulation of smooth muscle cell migration"/>
    <property type="evidence" value="ECO:0007669"/>
    <property type="project" value="Ensembl"/>
</dbReference>
<dbReference type="GO" id="GO:0045944">
    <property type="term" value="P:positive regulation of transcription by RNA polymerase II"/>
    <property type="evidence" value="ECO:0000314"/>
    <property type="project" value="MGI"/>
</dbReference>
<dbReference type="GO" id="GO:1904075">
    <property type="term" value="P:positive regulation of trophectodermal cell proliferation"/>
    <property type="evidence" value="ECO:0007669"/>
    <property type="project" value="Ensembl"/>
</dbReference>
<dbReference type="GO" id="GO:1904692">
    <property type="term" value="P:positive regulation of type B pancreatic cell proliferation"/>
    <property type="evidence" value="ECO:0000316"/>
    <property type="project" value="MGI"/>
</dbReference>
<dbReference type="GO" id="GO:1904707">
    <property type="term" value="P:positive regulation of vascular associated smooth muscle cell proliferation"/>
    <property type="evidence" value="ECO:0007669"/>
    <property type="project" value="Ensembl"/>
</dbReference>
<dbReference type="GO" id="GO:0099170">
    <property type="term" value="P:postsynaptic modulation of chemical synaptic transmission"/>
    <property type="evidence" value="ECO:0000314"/>
    <property type="project" value="SynGO"/>
</dbReference>
<dbReference type="GO" id="GO:0060527">
    <property type="term" value="P:prostate epithelial cord arborization involved in prostate glandular acinus morphogenesis"/>
    <property type="evidence" value="ECO:0000315"/>
    <property type="project" value="MGI"/>
</dbReference>
<dbReference type="GO" id="GO:0060740">
    <property type="term" value="P:prostate gland epithelium morphogenesis"/>
    <property type="evidence" value="ECO:0000315"/>
    <property type="project" value="MGI"/>
</dbReference>
<dbReference type="GO" id="GO:0060736">
    <property type="term" value="P:prostate gland growth"/>
    <property type="evidence" value="ECO:0000314"/>
    <property type="project" value="MGI"/>
</dbReference>
<dbReference type="GO" id="GO:0060741">
    <property type="term" value="P:prostate gland stromal morphogenesis"/>
    <property type="evidence" value="ECO:0000315"/>
    <property type="project" value="MGI"/>
</dbReference>
<dbReference type="GO" id="GO:0050821">
    <property type="term" value="P:protein stabilization"/>
    <property type="evidence" value="ECO:0007669"/>
    <property type="project" value="Ensembl"/>
</dbReference>
<dbReference type="GO" id="GO:0032878">
    <property type="term" value="P:regulation of establishment or maintenance of cell polarity"/>
    <property type="evidence" value="ECO:0000314"/>
    <property type="project" value="MGI"/>
</dbReference>
<dbReference type="GO" id="GO:0045428">
    <property type="term" value="P:regulation of nitric oxide biosynthetic process"/>
    <property type="evidence" value="ECO:0000315"/>
    <property type="project" value="MGI"/>
</dbReference>
<dbReference type="GO" id="GO:0051246">
    <property type="term" value="P:regulation of protein metabolic process"/>
    <property type="evidence" value="ECO:0000316"/>
    <property type="project" value="MGI"/>
</dbReference>
<dbReference type="GO" id="GO:0009408">
    <property type="term" value="P:response to heat"/>
    <property type="evidence" value="ECO:0007669"/>
    <property type="project" value="Ensembl"/>
</dbReference>
<dbReference type="GO" id="GO:0007608">
    <property type="term" value="P:sensory perception of smell"/>
    <property type="evidence" value="ECO:0000304"/>
    <property type="project" value="UniProtKB"/>
</dbReference>
<dbReference type="GO" id="GO:0014834">
    <property type="term" value="P:skeletal muscle satellite cell maintenance involved in skeletal muscle regeneration"/>
    <property type="evidence" value="ECO:0007669"/>
    <property type="project" value="Ensembl"/>
</dbReference>
<dbReference type="GO" id="GO:0044342">
    <property type="term" value="P:type B pancreatic cell proliferation"/>
    <property type="evidence" value="ECO:0000316"/>
    <property type="project" value="MGI"/>
</dbReference>
<dbReference type="GO" id="GO:0060509">
    <property type="term" value="P:type I pneumocyte differentiation"/>
    <property type="evidence" value="ECO:0000315"/>
    <property type="project" value="MGI"/>
</dbReference>
<dbReference type="GO" id="GO:0060510">
    <property type="term" value="P:type II pneumocyte differentiation"/>
    <property type="evidence" value="ECO:0000315"/>
    <property type="project" value="MGI"/>
</dbReference>
<dbReference type="GO" id="GO:0042060">
    <property type="term" value="P:wound healing"/>
    <property type="evidence" value="ECO:0007669"/>
    <property type="project" value="Ensembl"/>
</dbReference>
<dbReference type="CDD" id="cd04368">
    <property type="entry name" value="IlGF"/>
    <property type="match status" value="1"/>
</dbReference>
<dbReference type="FunFam" id="1.10.100.10:FF:000001">
    <property type="entry name" value="insulin-like growth factor I isoform X1"/>
    <property type="match status" value="1"/>
</dbReference>
<dbReference type="Gene3D" id="1.10.100.10">
    <property type="entry name" value="Insulin-like"/>
    <property type="match status" value="1"/>
</dbReference>
<dbReference type="InterPro" id="IPR022341">
    <property type="entry name" value="IGF-I"/>
</dbReference>
<dbReference type="InterPro" id="IPR016179">
    <property type="entry name" value="Insulin-like"/>
</dbReference>
<dbReference type="InterPro" id="IPR022350">
    <property type="entry name" value="Insulin-like_growth_factor"/>
</dbReference>
<dbReference type="InterPro" id="IPR036438">
    <property type="entry name" value="Insulin-like_sf"/>
</dbReference>
<dbReference type="InterPro" id="IPR022353">
    <property type="entry name" value="Insulin_CS"/>
</dbReference>
<dbReference type="InterPro" id="IPR022352">
    <property type="entry name" value="Insulin_family"/>
</dbReference>
<dbReference type="PANTHER" id="PTHR46845">
    <property type="entry name" value="INSULIN-LIKE GROWTH FACTOR I"/>
    <property type="match status" value="1"/>
</dbReference>
<dbReference type="PANTHER" id="PTHR46845:SF1">
    <property type="entry name" value="INSULIN-LIKE GROWTH FACTOR I"/>
    <property type="match status" value="1"/>
</dbReference>
<dbReference type="Pfam" id="PF00049">
    <property type="entry name" value="Insulin"/>
    <property type="match status" value="2"/>
</dbReference>
<dbReference type="PRINTS" id="PR02002">
    <property type="entry name" value="INSLNLIKEGF"/>
</dbReference>
<dbReference type="PRINTS" id="PR02005">
    <property type="entry name" value="INSLNLIKEGF1"/>
</dbReference>
<dbReference type="PRINTS" id="PR00276">
    <property type="entry name" value="INSULINFAMLY"/>
</dbReference>
<dbReference type="SMART" id="SM00078">
    <property type="entry name" value="IlGF"/>
    <property type="match status" value="1"/>
</dbReference>
<dbReference type="SUPFAM" id="SSF56994">
    <property type="entry name" value="Insulin-like"/>
    <property type="match status" value="1"/>
</dbReference>
<dbReference type="PROSITE" id="PS00262">
    <property type="entry name" value="INSULIN"/>
    <property type="match status" value="1"/>
</dbReference>
<accession>P05017</accession>
<accession>P05018</accession>
<accession>Q6LDP4</accession>
<accession>Q8C4U6</accession>
<gene>
    <name evidence="13" type="primary">Igf1</name>
    <name evidence="10" type="synonym">Igf-1</name>
</gene>
<comment type="function">
    <text evidence="2 3 8">The insulin-like growth factors, isolated from plasma, are structurally and functionally related to insulin but have a much higher growth-promoting activity. May be a physiological regulator of [1-14C]-2-deoxy-D-glucose (2DG) transport and glycogen synthesis in osteoblasts. Stimulates glucose transport in bone-derived osteoblastic (PyMS) cells and is effective at much lower concentrations than insulin, not only regarding glycogen and DNA synthesis but also with regard to enhancing glucose uptake. May play a role in synapse maturation (By similarity). Ca(2+)-dependent exocytosis of IGF1 is required for sensory perception of smell in the olfactory bulb (PubMed:21496647). Acts as a ligand for IGF1R. Binds to the alpha subunit of IGF1R, leading to the activation of the intrinsic tyrosine kinase activity which autophosphorylates tyrosine residues in the beta subunit thus initiating a cascade of down-stream signaling events leading to activation of the PI3K-AKT/PKB and the Ras-MAPK pathways. Binds to integrins ITGAV:ITGB3 and ITGA6:ITGB4. Its binding to integrins and subsequent ternary complex formation with integrins and IGFR1 are essential for IGF1 signaling. Induces the phosphorylation and activation of IGFR1, MAPK3/ERK1, MAPK1/ERK2 and AKT1 (By similarity). As part of the MAPK/ERK signaling pathway, acts as a negative regulator of apoptosis in cardiomyocytes via promotion of STUB1/CHIP-mediated ubiquitination and degradation of ICER-type isoforms of CREM (By similarity).</text>
</comment>
<comment type="subunit">
    <text evidence="2 7">Forms a ternary complex with IGFR1 and ITGAV:ITGB3. Forms a ternary complex with IGFR1 and ITGA6:ITGB4. Interacts with SH2D3C isoform 2 (PubMed:20881139). Forms a ternary complex with IGFBP3 and ALS.</text>
</comment>
<comment type="subcellular location">
    <subcellularLocation>
        <location evidence="8">Secreted</location>
    </subcellularLocation>
</comment>
<comment type="alternative products">
    <event type="alternative splicing"/>
    <isoform>
        <id>P05017-1</id>
        <name>IGF-IA</name>
        <sequence type="displayed"/>
    </isoform>
    <isoform>
        <id>P05017-2</id>
        <name>IGF-IB</name>
        <sequence type="described" ref="VSP_012165"/>
    </isoform>
</comment>
<comment type="induction">
    <text evidence="6">Expression in the bone oscillates in a circadian manner and its expression is negatively regulated by CCRN4L/NOC.</text>
</comment>
<comment type="similarity">
    <text evidence="12">Belongs to the insulin family.</text>
</comment>
<comment type="sequence caution" evidence="12">
    <conflict type="erroneous initiation">
        <sequence resource="EMBL-CDS" id="AAH12409"/>
    </conflict>
    <text>Truncated N-terminus.</text>
</comment>
<name>IGF1_MOUSE</name>
<sequence>MGKISSLPTQLFKICLCDFLKIKIHIMSSSHLFYLALCLLTFTSSTTAGPETLCGAELVDALQFVCGPRGFYFNKPTGYGSSIRRAPQTGIVDECCFRSCDLRRLEMYCAPLKPTKAARSIRAQRHTDMPKTQKEVHLKNTSRGSAGNKTYRM</sequence>
<protein>
    <recommendedName>
        <fullName evidence="13">Insulin-like growth factor 1</fullName>
    </recommendedName>
    <alternativeName>
        <fullName evidence="11">Insulin-like growth factor I</fullName>
        <shortName evidence="11">IGF-I</shortName>
    </alternativeName>
    <alternativeName>
        <fullName>Somatomedin</fullName>
    </alternativeName>
</protein>
<evidence type="ECO:0000250" key="1"/>
<evidence type="ECO:0000250" key="2">
    <source>
        <dbReference type="UniProtKB" id="P05019"/>
    </source>
</evidence>
<evidence type="ECO:0000250" key="3">
    <source>
        <dbReference type="UniProtKB" id="P08025"/>
    </source>
</evidence>
<evidence type="ECO:0000255" key="4"/>
<evidence type="ECO:0000256" key="5">
    <source>
        <dbReference type="SAM" id="MobiDB-lite"/>
    </source>
</evidence>
<evidence type="ECO:0000269" key="6">
    <source>
    </source>
</evidence>
<evidence type="ECO:0000269" key="7">
    <source>
    </source>
</evidence>
<evidence type="ECO:0000269" key="8">
    <source>
    </source>
</evidence>
<evidence type="ECO:0000303" key="9">
    <source>
    </source>
</evidence>
<evidence type="ECO:0000303" key="10">
    <source>
    </source>
</evidence>
<evidence type="ECO:0000303" key="11">
    <source>
    </source>
</evidence>
<evidence type="ECO:0000305" key="12"/>
<evidence type="ECO:0000312" key="13">
    <source>
        <dbReference type="MGI" id="MGI:96432"/>
    </source>
</evidence>
<keyword id="KW-0025">Alternative splicing</keyword>
<keyword id="KW-1015">Disulfide bond</keyword>
<keyword id="KW-0339">Growth factor</keyword>
<keyword id="KW-1185">Reference proteome</keyword>
<keyword id="KW-0964">Secreted</keyword>
<keyword id="KW-0732">Signal</keyword>
<feature type="signal peptide" evidence="4">
    <location>
        <begin position="1"/>
        <end status="unknown"/>
    </location>
</feature>
<feature type="propeptide" id="PRO_0000015666" evidence="1">
    <location>
        <begin status="unknown"/>
        <end position="48"/>
    </location>
</feature>
<feature type="chain" id="PRO_0000015667" description="Insulin-like growth factor 1">
    <location>
        <begin position="49"/>
        <end position="118"/>
    </location>
</feature>
<feature type="propeptide" id="PRO_0000015668" description="E peptide">
    <location>
        <begin position="119"/>
        <end position="153"/>
    </location>
</feature>
<feature type="region of interest" description="B">
    <location>
        <begin position="49"/>
        <end position="77"/>
    </location>
</feature>
<feature type="region of interest" description="C">
    <location>
        <begin position="78"/>
        <end position="89"/>
    </location>
</feature>
<feature type="region of interest" description="A">
    <location>
        <begin position="90"/>
        <end position="110"/>
    </location>
</feature>
<feature type="region of interest" description="D">
    <location>
        <begin position="111"/>
        <end position="118"/>
    </location>
</feature>
<feature type="region of interest" description="Disordered" evidence="5">
    <location>
        <begin position="120"/>
        <end position="153"/>
    </location>
</feature>
<feature type="compositionally biased region" description="Basic and acidic residues" evidence="5">
    <location>
        <begin position="125"/>
        <end position="138"/>
    </location>
</feature>
<feature type="compositionally biased region" description="Polar residues" evidence="5">
    <location>
        <begin position="139"/>
        <end position="153"/>
    </location>
</feature>
<feature type="disulfide bond" evidence="2">
    <location>
        <begin position="54"/>
        <end position="96"/>
    </location>
</feature>
<feature type="disulfide bond" evidence="2">
    <location>
        <begin position="66"/>
        <end position="109"/>
    </location>
</feature>
<feature type="disulfide bond" evidence="2">
    <location>
        <begin position="95"/>
        <end position="100"/>
    </location>
</feature>
<feature type="splice variant" id="VSP_012165" description="In isoform IGF-IB." evidence="9 11">
    <original>EVHLKNTSRGSAGNKTYRM</original>
    <variation>SPSLSTNKKTKLQRRRKGSTFEE</variation>
    <location>
        <begin position="135"/>
        <end position="153"/>
    </location>
</feature>
<proteinExistence type="evidence at protein level"/>
<reference key="1">
    <citation type="journal article" date="2005" name="Science">
        <title>The transcriptional landscape of the mammalian genome.</title>
        <authorList>
            <person name="Carninci P."/>
            <person name="Kasukawa T."/>
            <person name="Katayama S."/>
            <person name="Gough J."/>
            <person name="Frith M.C."/>
            <person name="Maeda N."/>
            <person name="Oyama R."/>
            <person name="Ravasi T."/>
            <person name="Lenhard B."/>
            <person name="Wells C."/>
            <person name="Kodzius R."/>
            <person name="Shimokawa K."/>
            <person name="Bajic V.B."/>
            <person name="Brenner S.E."/>
            <person name="Batalov S."/>
            <person name="Forrest A.R."/>
            <person name="Zavolan M."/>
            <person name="Davis M.J."/>
            <person name="Wilming L.G."/>
            <person name="Aidinis V."/>
            <person name="Allen J.E."/>
            <person name="Ambesi-Impiombato A."/>
            <person name="Apweiler R."/>
            <person name="Aturaliya R.N."/>
            <person name="Bailey T.L."/>
            <person name="Bansal M."/>
            <person name="Baxter L."/>
            <person name="Beisel K.W."/>
            <person name="Bersano T."/>
            <person name="Bono H."/>
            <person name="Chalk A.M."/>
            <person name="Chiu K.P."/>
            <person name="Choudhary V."/>
            <person name="Christoffels A."/>
            <person name="Clutterbuck D.R."/>
            <person name="Crowe M.L."/>
            <person name="Dalla E."/>
            <person name="Dalrymple B.P."/>
            <person name="de Bono B."/>
            <person name="Della Gatta G."/>
            <person name="di Bernardo D."/>
            <person name="Down T."/>
            <person name="Engstrom P."/>
            <person name="Fagiolini M."/>
            <person name="Faulkner G."/>
            <person name="Fletcher C.F."/>
            <person name="Fukushima T."/>
            <person name="Furuno M."/>
            <person name="Futaki S."/>
            <person name="Gariboldi M."/>
            <person name="Georgii-Hemming P."/>
            <person name="Gingeras T.R."/>
            <person name="Gojobori T."/>
            <person name="Green R.E."/>
            <person name="Gustincich S."/>
            <person name="Harbers M."/>
            <person name="Hayashi Y."/>
            <person name="Hensch T.K."/>
            <person name="Hirokawa N."/>
            <person name="Hill D."/>
            <person name="Huminiecki L."/>
            <person name="Iacono M."/>
            <person name="Ikeo K."/>
            <person name="Iwama A."/>
            <person name="Ishikawa T."/>
            <person name="Jakt M."/>
            <person name="Kanapin A."/>
            <person name="Katoh M."/>
            <person name="Kawasawa Y."/>
            <person name="Kelso J."/>
            <person name="Kitamura H."/>
            <person name="Kitano H."/>
            <person name="Kollias G."/>
            <person name="Krishnan S.P."/>
            <person name="Kruger A."/>
            <person name="Kummerfeld S.K."/>
            <person name="Kurochkin I.V."/>
            <person name="Lareau L.F."/>
            <person name="Lazarevic D."/>
            <person name="Lipovich L."/>
            <person name="Liu J."/>
            <person name="Liuni S."/>
            <person name="McWilliam S."/>
            <person name="Madan Babu M."/>
            <person name="Madera M."/>
            <person name="Marchionni L."/>
            <person name="Matsuda H."/>
            <person name="Matsuzawa S."/>
            <person name="Miki H."/>
            <person name="Mignone F."/>
            <person name="Miyake S."/>
            <person name="Morris K."/>
            <person name="Mottagui-Tabar S."/>
            <person name="Mulder N."/>
            <person name="Nakano N."/>
            <person name="Nakauchi H."/>
            <person name="Ng P."/>
            <person name="Nilsson R."/>
            <person name="Nishiguchi S."/>
            <person name="Nishikawa S."/>
            <person name="Nori F."/>
            <person name="Ohara O."/>
            <person name="Okazaki Y."/>
            <person name="Orlando V."/>
            <person name="Pang K.C."/>
            <person name="Pavan W.J."/>
            <person name="Pavesi G."/>
            <person name="Pesole G."/>
            <person name="Petrovsky N."/>
            <person name="Piazza S."/>
            <person name="Reed J."/>
            <person name="Reid J.F."/>
            <person name="Ring B.Z."/>
            <person name="Ringwald M."/>
            <person name="Rost B."/>
            <person name="Ruan Y."/>
            <person name="Salzberg S.L."/>
            <person name="Sandelin A."/>
            <person name="Schneider C."/>
            <person name="Schoenbach C."/>
            <person name="Sekiguchi K."/>
            <person name="Semple C.A."/>
            <person name="Seno S."/>
            <person name="Sessa L."/>
            <person name="Sheng Y."/>
            <person name="Shibata Y."/>
            <person name="Shimada H."/>
            <person name="Shimada K."/>
            <person name="Silva D."/>
            <person name="Sinclair B."/>
            <person name="Sperling S."/>
            <person name="Stupka E."/>
            <person name="Sugiura K."/>
            <person name="Sultana R."/>
            <person name="Takenaka Y."/>
            <person name="Taki K."/>
            <person name="Tammoja K."/>
            <person name="Tan S.L."/>
            <person name="Tang S."/>
            <person name="Taylor M.S."/>
            <person name="Tegner J."/>
            <person name="Teichmann S.A."/>
            <person name="Ueda H.R."/>
            <person name="van Nimwegen E."/>
            <person name="Verardo R."/>
            <person name="Wei C.L."/>
            <person name="Yagi K."/>
            <person name="Yamanishi H."/>
            <person name="Zabarovsky E."/>
            <person name="Zhu S."/>
            <person name="Zimmer A."/>
            <person name="Hide W."/>
            <person name="Bult C."/>
            <person name="Grimmond S.M."/>
            <person name="Teasdale R.D."/>
            <person name="Liu E.T."/>
            <person name="Brusic V."/>
            <person name="Quackenbush J."/>
            <person name="Wahlestedt C."/>
            <person name="Mattick J.S."/>
            <person name="Hume D.A."/>
            <person name="Kai C."/>
            <person name="Sasaki D."/>
            <person name="Tomaru Y."/>
            <person name="Fukuda S."/>
            <person name="Kanamori-Katayama M."/>
            <person name="Suzuki M."/>
            <person name="Aoki J."/>
            <person name="Arakawa T."/>
            <person name="Iida J."/>
            <person name="Imamura K."/>
            <person name="Itoh M."/>
            <person name="Kato T."/>
            <person name="Kawaji H."/>
            <person name="Kawagashira N."/>
            <person name="Kawashima T."/>
            <person name="Kojima M."/>
            <person name="Kondo S."/>
            <person name="Konno H."/>
            <person name="Nakano K."/>
            <person name="Ninomiya N."/>
            <person name="Nishio T."/>
            <person name="Okada M."/>
            <person name="Plessy C."/>
            <person name="Shibata K."/>
            <person name="Shiraki T."/>
            <person name="Suzuki S."/>
            <person name="Tagami M."/>
            <person name="Waki K."/>
            <person name="Watahiki A."/>
            <person name="Okamura-Oho Y."/>
            <person name="Suzuki H."/>
            <person name="Kawai J."/>
            <person name="Hayashizaki Y."/>
        </authorList>
    </citation>
    <scope>NUCLEOTIDE SEQUENCE [LARGE SCALE MRNA] (ISOFORM IGF-IA)</scope>
    <source>
        <strain>C57BL/6J</strain>
        <tissue>Cerebellum</tissue>
    </source>
</reference>
<reference key="2">
    <citation type="journal article" date="2004" name="Genome Res.">
        <title>The status, quality, and expansion of the NIH full-length cDNA project: the Mammalian Gene Collection (MGC).</title>
        <authorList>
            <consortium name="The MGC Project Team"/>
        </authorList>
    </citation>
    <scope>NUCLEOTIDE SEQUENCE [LARGE SCALE MRNA] OF 18-153 (ISOFORM IGF-IB)</scope>
    <source>
        <strain>FVB/N</strain>
        <tissue>Liver</tissue>
    </source>
</reference>
<reference key="3">
    <citation type="journal article" date="1986" name="Nucleic Acids Res.">
        <title>Sequences of liver cDNAs encoding two different mouse insulin-like growth factor I precursors.</title>
        <authorList>
            <person name="Bell G.I."/>
            <person name="Stempien M.M."/>
            <person name="Fong N.M."/>
            <person name="Rall L.B."/>
        </authorList>
    </citation>
    <scope>NUCLEOTIDE SEQUENCE [MRNA] OF 27-153 (ISOFORMS IGF-IA AND IGF-IB)</scope>
    <source>
        <tissue>Liver</tissue>
    </source>
</reference>
<reference key="4">
    <citation type="journal article" date="1989" name="J. Biol. Chem.">
        <title>Insulin-like growth factors (IGF) in muscle development. Expression of IGF-I, the IGF-I receptor, and an IGF binding protein during myoblast differentiation.</title>
        <authorList>
            <person name="Tollefsen S.E."/>
            <person name="Lajara R."/>
            <person name="McCusker R.H."/>
            <person name="Clemmons D.R."/>
            <person name="Rotwein P."/>
        </authorList>
    </citation>
    <scope>NUCLEOTIDE SEQUENCE [GENOMIC DNA] OF 75-134</scope>
</reference>
<reference key="5">
    <citation type="journal article" date="1986" name="Proc. Natl. Acad. Sci. U.S.A.">
        <title>Regulation of insulin-like growth factor I gene expression by growth hormone.</title>
        <authorList>
            <person name="Mathews L.S."/>
            <person name="Norstedt G."/>
            <person name="Palmiter R.D."/>
        </authorList>
    </citation>
    <scope>NUCLEOTIDE SEQUENCE [GENOMIC DNA] OF 75-134</scope>
</reference>
<reference key="6">
    <citation type="journal article" date="2010" name="Cell">
        <title>A tissue-specific atlas of mouse protein phosphorylation and expression.</title>
        <authorList>
            <person name="Huttlin E.L."/>
            <person name="Jedrychowski M.P."/>
            <person name="Elias J.E."/>
            <person name="Goswami T."/>
            <person name="Rad R."/>
            <person name="Beausoleil S.A."/>
            <person name="Villen J."/>
            <person name="Haas W."/>
            <person name="Sowa M.E."/>
            <person name="Gygi S.P."/>
        </authorList>
    </citation>
    <scope>IDENTIFICATION BY MASS SPECTROMETRY [LARGE SCALE ANALYSIS]</scope>
    <source>
        <tissue>Liver</tissue>
    </source>
</reference>
<reference key="7">
    <citation type="journal article" date="2010" name="Endocrinology">
        <title>Nocturnin suppresses igf1 expression in bone by targeting the 3' untranslated region of igf1 mRNA.</title>
        <authorList>
            <person name="Kawai M."/>
            <person name="Delany A.M."/>
            <person name="Green C.B."/>
            <person name="Adamo M.L."/>
            <person name="Rosen C.J."/>
        </authorList>
    </citation>
    <scope>INDUCTION</scope>
</reference>
<reference key="8">
    <citation type="journal article" date="2010" name="J. Neurosci.">
        <title>The SRC homology 2 domain protein Shep1 plays an important role in the penetration of olfactory sensory axons into the forebrain.</title>
        <authorList>
            <person name="Wang L."/>
            <person name="Vervoort V."/>
            <person name="Wallez Y."/>
            <person name="Core N."/>
            <person name="Cremer H."/>
            <person name="Pasquale E.B."/>
        </authorList>
    </citation>
    <scope>INTERACTION WITH SH2D3C</scope>
</reference>
<reference key="9">
    <citation type="journal article" date="2011" name="Cell">
        <title>Activity-dependent IGF-1 exocytosis is controlled by the Ca(2+)-sensor synaptotagmin-10.</title>
        <authorList>
            <person name="Cao P."/>
            <person name="Maximov A."/>
            <person name="Suedhof T.C."/>
        </authorList>
    </citation>
    <scope>FUNCTION</scope>
    <scope>SUBCELLULAR LOCATION</scope>
</reference>
<organism>
    <name type="scientific">Mus musculus</name>
    <name type="common">Mouse</name>
    <dbReference type="NCBI Taxonomy" id="10090"/>
    <lineage>
        <taxon>Eukaryota</taxon>
        <taxon>Metazoa</taxon>
        <taxon>Chordata</taxon>
        <taxon>Craniata</taxon>
        <taxon>Vertebrata</taxon>
        <taxon>Euteleostomi</taxon>
        <taxon>Mammalia</taxon>
        <taxon>Eutheria</taxon>
        <taxon>Euarchontoglires</taxon>
        <taxon>Glires</taxon>
        <taxon>Rodentia</taxon>
        <taxon>Myomorpha</taxon>
        <taxon>Muroidea</taxon>
        <taxon>Muridae</taxon>
        <taxon>Murinae</taxon>
        <taxon>Mus</taxon>
        <taxon>Mus</taxon>
    </lineage>
</organism>